<sequence>MNTAPSRPSPTRRDPYSFGDSRDTRRDRSPIRGSPRREPRDGRNGRDARDSRDIRDPRDLRDRRDSRDIRDHRDSRSVREARDLRDFRDFRDLRDSRDFRDHRDPVYDRYRDIRDSRDPLYRREGSYDRYLRVDDYCRRKDDSYFDRYRDSFDGRGPPGPESQSRAKERLKREERRREELYRRYFEEIQRRFDAERPVDCSVIVVNKQTKDYAESVGRKVRDLGMVVDLIFLNTEVSLSQALEDVSRGGSPFAIVITQQHQIHRSCTVNIMFGTPQEHRNMPQADAMVLVARNYERYKNDCREKEREEIARQAAKMANDAILQERDRGGPEEGGRGGHPPAIQSLINLLADNRYLTAEETDKIINYLRERKERLLRSSADSLPGPISRQPLGAASGSSLKSQPSSQPLQSGQVLPSATPTPAAPPTSQQELQAKILSLFNSGAVAANSSSASPSVATGSSQNQNFSTAANSQPQQRPQASGNQPPNIVGQAGSARNMGPRPGAPSQGLFGQPSSRLAPASTMASQRPVSSTGINFDNPSVQKALDTLIQSGPALSHLVSQTAAQVGRPQAPMGSYQRHY</sequence>
<organism>
    <name type="scientific">Mus musculus</name>
    <name type="common">Mouse</name>
    <dbReference type="NCBI Taxonomy" id="10090"/>
    <lineage>
        <taxon>Eukaryota</taxon>
        <taxon>Metazoa</taxon>
        <taxon>Chordata</taxon>
        <taxon>Craniata</taxon>
        <taxon>Vertebrata</taxon>
        <taxon>Euteleostomi</taxon>
        <taxon>Mammalia</taxon>
        <taxon>Eutheria</taxon>
        <taxon>Euarchontoglires</taxon>
        <taxon>Glires</taxon>
        <taxon>Rodentia</taxon>
        <taxon>Myomorpha</taxon>
        <taxon>Muroidea</taxon>
        <taxon>Muridae</taxon>
        <taxon>Murinae</taxon>
        <taxon>Mus</taxon>
        <taxon>Mus</taxon>
    </lineage>
</organism>
<feature type="chain" id="PRO_0000094412" description="Nuclear receptor coactivator 5">
    <location>
        <begin position="1"/>
        <end position="579"/>
    </location>
</feature>
<feature type="region of interest" description="Transcription repression">
    <location>
        <begin position="1"/>
        <end position="158"/>
    </location>
</feature>
<feature type="region of interest" description="Disordered" evidence="3">
    <location>
        <begin position="1"/>
        <end position="77"/>
    </location>
</feature>
<feature type="region of interest" description="Disordered" evidence="3">
    <location>
        <begin position="148"/>
        <end position="172"/>
    </location>
</feature>
<feature type="region of interest" description="Disordered" evidence="3">
    <location>
        <begin position="378"/>
        <end position="428"/>
    </location>
</feature>
<feature type="region of interest" description="Disordered" evidence="3">
    <location>
        <begin position="446"/>
        <end position="529"/>
    </location>
</feature>
<feature type="region of interest" description="Transcription activation">
    <location>
        <begin position="458"/>
        <end position="579"/>
    </location>
</feature>
<feature type="short sequence motif" description="LXXLL motif">
    <location>
        <begin position="345"/>
        <end position="349"/>
    </location>
</feature>
<feature type="compositionally biased region" description="Basic and acidic residues" evidence="3">
    <location>
        <begin position="11"/>
        <end position="77"/>
    </location>
</feature>
<feature type="compositionally biased region" description="Low complexity" evidence="3">
    <location>
        <begin position="395"/>
        <end position="420"/>
    </location>
</feature>
<feature type="compositionally biased region" description="Low complexity" evidence="3">
    <location>
        <begin position="446"/>
        <end position="460"/>
    </location>
</feature>
<feature type="compositionally biased region" description="Polar residues" evidence="3">
    <location>
        <begin position="461"/>
        <end position="485"/>
    </location>
</feature>
<feature type="modified residue" description="N-acetylmethionine" evidence="2">
    <location>
        <position position="1"/>
    </location>
</feature>
<feature type="modified residue" description="Phosphothreonine" evidence="2">
    <location>
        <position position="3"/>
    </location>
</feature>
<feature type="modified residue" description="Phosphoserine" evidence="2">
    <location>
        <position position="9"/>
    </location>
</feature>
<feature type="modified residue" description="Phosphoserine" evidence="2">
    <location>
        <position position="21"/>
    </location>
</feature>
<feature type="modified residue" description="Phosphoserine" evidence="2">
    <location>
        <position position="29"/>
    </location>
</feature>
<feature type="modified residue" description="Phosphoserine" evidence="2">
    <location>
        <position position="34"/>
    </location>
</feature>
<feature type="modified residue" description="Phosphoserine" evidence="2">
    <location>
        <position position="96"/>
    </location>
</feature>
<feature type="modified residue" description="Phosphoserine" evidence="2">
    <location>
        <position position="116"/>
    </location>
</feature>
<feature type="modified residue" description="Phosphoserine" evidence="2">
    <location>
        <position position="126"/>
    </location>
</feature>
<feature type="modified residue" description="Phosphoserine" evidence="2">
    <location>
        <position position="143"/>
    </location>
</feature>
<feature type="modified residue" description="Phosphoserine" evidence="2">
    <location>
        <position position="151"/>
    </location>
</feature>
<feature type="modified residue" description="Phosphothreonine" evidence="2">
    <location>
        <position position="274"/>
    </location>
</feature>
<feature type="modified residue" description="Phosphoserine" evidence="6">
    <location>
        <position position="378"/>
    </location>
</feature>
<feature type="modified residue" description="Phosphoserine" evidence="6">
    <location>
        <position position="381"/>
    </location>
</feature>
<keyword id="KW-0007">Acetylation</keyword>
<keyword id="KW-0539">Nucleus</keyword>
<keyword id="KW-0597">Phosphoprotein</keyword>
<keyword id="KW-1185">Reference proteome</keyword>
<keyword id="KW-0678">Repressor</keyword>
<keyword id="KW-0804">Transcription</keyword>
<keyword id="KW-0805">Transcription regulation</keyword>
<gene>
    <name type="primary">Ncoa5</name>
</gene>
<reference key="1">
    <citation type="journal article" date="2009" name="PLoS Biol.">
        <title>Lineage-specific biology revealed by a finished genome assembly of the mouse.</title>
        <authorList>
            <person name="Church D.M."/>
            <person name="Goodstadt L."/>
            <person name="Hillier L.W."/>
            <person name="Zody M.C."/>
            <person name="Goldstein S."/>
            <person name="She X."/>
            <person name="Bult C.J."/>
            <person name="Agarwala R."/>
            <person name="Cherry J.L."/>
            <person name="DiCuccio M."/>
            <person name="Hlavina W."/>
            <person name="Kapustin Y."/>
            <person name="Meric P."/>
            <person name="Maglott D."/>
            <person name="Birtle Z."/>
            <person name="Marques A.C."/>
            <person name="Graves T."/>
            <person name="Zhou S."/>
            <person name="Teague B."/>
            <person name="Potamousis K."/>
            <person name="Churas C."/>
            <person name="Place M."/>
            <person name="Herschleb J."/>
            <person name="Runnheim R."/>
            <person name="Forrest D."/>
            <person name="Amos-Landgraf J."/>
            <person name="Schwartz D.C."/>
            <person name="Cheng Z."/>
            <person name="Lindblad-Toh K."/>
            <person name="Eichler E.E."/>
            <person name="Ponting C.P."/>
        </authorList>
    </citation>
    <scope>NUCLEOTIDE SEQUENCE [LARGE SCALE GENOMIC DNA]</scope>
    <source>
        <strain>C57BL/6J</strain>
    </source>
</reference>
<reference key="2">
    <citation type="journal article" date="2004" name="Genome Res.">
        <title>The status, quality, and expansion of the NIH full-length cDNA project: the Mammalian Gene Collection (MGC).</title>
        <authorList>
            <consortium name="The MGC Project Team"/>
        </authorList>
    </citation>
    <scope>NUCLEOTIDE SEQUENCE [LARGE SCALE MRNA]</scope>
    <source>
        <tissue>Eye</tissue>
        <tissue>Retina</tissue>
    </source>
</reference>
<reference key="3">
    <citation type="journal article" date="2001" name="Mol. Cell. Biol.">
        <title>CIA, a novel estrogen receptor coactivator with a bifunctional nuclear receptor interacting determinant.</title>
        <authorList>
            <person name="Sauve F."/>
            <person name="McBroom L.D.B."/>
            <person name="Gallant J."/>
            <person name="Moraitis A.N."/>
            <person name="Labrie F."/>
            <person name="Giguere V."/>
        </authorList>
    </citation>
    <scope>DEVELOPMENTAL STAGE</scope>
</reference>
<reference key="4">
    <citation type="journal article" date="2007" name="Proc. Natl. Acad. Sci. U.S.A.">
        <title>Large-scale phosphorylation analysis of mouse liver.</title>
        <authorList>
            <person name="Villen J."/>
            <person name="Beausoleil S.A."/>
            <person name="Gerber S.A."/>
            <person name="Gygi S.P."/>
        </authorList>
    </citation>
    <scope>IDENTIFICATION BY MASS SPECTROMETRY [LARGE SCALE ANALYSIS]</scope>
    <source>
        <tissue>Liver</tissue>
    </source>
</reference>
<reference key="5">
    <citation type="journal article" date="2009" name="Mol. Cell. Proteomics">
        <title>Large scale localization of protein phosphorylation by use of electron capture dissociation mass spectrometry.</title>
        <authorList>
            <person name="Sweet S.M."/>
            <person name="Bailey C.M."/>
            <person name="Cunningham D.L."/>
            <person name="Heath J.K."/>
            <person name="Cooper H.J."/>
        </authorList>
    </citation>
    <scope>IDENTIFICATION BY MASS SPECTROMETRY [LARGE SCALE ANALYSIS]</scope>
    <source>
        <tissue>Embryonic fibroblast</tissue>
    </source>
</reference>
<reference key="6">
    <citation type="journal article" date="2010" name="Cell">
        <title>A tissue-specific atlas of mouse protein phosphorylation and expression.</title>
        <authorList>
            <person name="Huttlin E.L."/>
            <person name="Jedrychowski M.P."/>
            <person name="Elias J.E."/>
            <person name="Goswami T."/>
            <person name="Rad R."/>
            <person name="Beausoleil S.A."/>
            <person name="Villen J."/>
            <person name="Haas W."/>
            <person name="Sowa M.E."/>
            <person name="Gygi S.P."/>
        </authorList>
    </citation>
    <scope>PHOSPHORYLATION [LARGE SCALE ANALYSIS] AT SER-378 AND SER-381</scope>
    <scope>IDENTIFICATION BY MASS SPECTROMETRY [LARGE SCALE ANALYSIS]</scope>
    <source>
        <tissue>Brain</tissue>
        <tissue>Brown adipose tissue</tissue>
        <tissue>Kidney</tissue>
        <tissue>Lung</tissue>
        <tissue>Spleen</tissue>
        <tissue>Testis</tissue>
    </source>
</reference>
<reference key="7">
    <citation type="journal article" date="2013" name="Cell Rep.">
        <title>SILAC proteomics of planarians identifies Ncoa5 as a conserved component of pluripotent stem cells.</title>
        <authorList>
            <person name="Boeser A."/>
            <person name="Drexler H.C."/>
            <person name="Reuter H."/>
            <person name="Schmitz H."/>
            <person name="Wu G."/>
            <person name="Schoeler H.R."/>
            <person name="Gentile L."/>
            <person name="Bartscherer K."/>
        </authorList>
    </citation>
    <scope>SUBCELLULAR LOCATION</scope>
    <scope>DEVELOPMENTAL STAGE</scope>
</reference>
<comment type="function">
    <text evidence="1">Nuclear receptor coregulator that can have both coactivator and corepressor functions. Interacts with nuclear receptors for steroids (ESR1 and ESR2) independently of the steroid binding domain (AF-2) of the ESR receptors, and with the orphan nuclear receptor NR1D2. Involved in the coactivation of nuclear steroid receptors (ER) as well as the corepression of MYC in response to 17-beta-estradiol (E2) (By similarity).</text>
</comment>
<comment type="subunit">
    <text evidence="1">Binds HTATIP2/TIP30. Interacts with YLPM1. Forms a complex with ILF2, ILF3, YLPM1, KHDRBS1, RBMX and PPP1CA (By similarity).</text>
</comment>
<comment type="subcellular location">
    <subcellularLocation>
        <location evidence="5">Nucleus</location>
    </subcellularLocation>
</comment>
<comment type="developmental stage">
    <text evidence="4 5">Expressed in both unfertilized and fertilized eggs during preimplantation development (at protein level) (PubMed:24268775). Detected in all blastmeres of morulae at 3 days post-coitum (dpc) (at protein level) (PubMed:24268775). Localizes to the pluripotent inner cell mass (ICM) of blastocysts at 4 dpc (at protein level) (PubMed:24268775). Expressed in many fetal tissues (PubMed:11113208). High expression in fetal heart and kidney (PubMed:11113208). Weak expression in fetal liver (PubMed:11113208).</text>
</comment>
<comment type="domain">
    <text evidence="1">Contains one Leu-Xaa-Xaa-Leu-Leu (LxxLL) motif that is essential for the association with nuclear receptors.</text>
</comment>
<proteinExistence type="evidence at protein level"/>
<accession>Q91W39</accession>
<accession>A2A5L2</accession>
<protein>
    <recommendedName>
        <fullName>Nuclear receptor coactivator 5</fullName>
        <shortName>NCoA-5</shortName>
    </recommendedName>
    <alternativeName>
        <fullName>Coactivator independent of AF-2</fullName>
        <shortName>CIA</shortName>
    </alternativeName>
</protein>
<name>NCOA5_MOUSE</name>
<dbReference type="EMBL" id="AL591495">
    <property type="status" value="NOT_ANNOTATED_CDS"/>
    <property type="molecule type" value="Genomic_DNA"/>
</dbReference>
<dbReference type="EMBL" id="BC017152">
    <property type="protein sequence ID" value="AAH17152.1"/>
    <property type="molecule type" value="mRNA"/>
</dbReference>
<dbReference type="CCDS" id="CCDS17068.1"/>
<dbReference type="RefSeq" id="NP_659141.1">
    <property type="nucleotide sequence ID" value="NM_144892.1"/>
</dbReference>
<dbReference type="BMRB" id="Q91W39"/>
<dbReference type="SMR" id="Q91W39"/>
<dbReference type="BioGRID" id="230788">
    <property type="interactions" value="8"/>
</dbReference>
<dbReference type="FunCoup" id="Q91W39">
    <property type="interactions" value="3091"/>
</dbReference>
<dbReference type="IntAct" id="Q91W39">
    <property type="interactions" value="6"/>
</dbReference>
<dbReference type="MINT" id="Q91W39"/>
<dbReference type="STRING" id="10090.ENSMUSP00000046388"/>
<dbReference type="GlyGen" id="Q91W39">
    <property type="glycosylation" value="4 sites, 1 N-linked glycan (1 site), 1 O-linked glycan (3 sites)"/>
</dbReference>
<dbReference type="iPTMnet" id="Q91W39"/>
<dbReference type="PhosphoSitePlus" id="Q91W39"/>
<dbReference type="SwissPalm" id="Q91W39"/>
<dbReference type="jPOST" id="Q91W39"/>
<dbReference type="PaxDb" id="10090-ENSMUSP00000046388"/>
<dbReference type="PeptideAtlas" id="Q91W39"/>
<dbReference type="ProteomicsDB" id="287455"/>
<dbReference type="Pumba" id="Q91W39"/>
<dbReference type="Antibodypedia" id="27960">
    <property type="antibodies" value="140 antibodies from 25 providers"/>
</dbReference>
<dbReference type="DNASU" id="228869"/>
<dbReference type="Ensembl" id="ENSMUST00000040381.15">
    <property type="protein sequence ID" value="ENSMUSP00000046388.9"/>
    <property type="gene ID" value="ENSMUSG00000039804.16"/>
</dbReference>
<dbReference type="GeneID" id="228869"/>
<dbReference type="KEGG" id="mmu:228869"/>
<dbReference type="UCSC" id="uc008nwv.1">
    <property type="organism name" value="mouse"/>
</dbReference>
<dbReference type="AGR" id="MGI:2385165"/>
<dbReference type="CTD" id="57727"/>
<dbReference type="MGI" id="MGI:2385165">
    <property type="gene designation" value="Ncoa5"/>
</dbReference>
<dbReference type="VEuPathDB" id="HostDB:ENSMUSG00000039804"/>
<dbReference type="eggNOG" id="KOG0845">
    <property type="taxonomic scope" value="Eukaryota"/>
</dbReference>
<dbReference type="GeneTree" id="ENSGT00530000064134"/>
<dbReference type="HOGENOM" id="CLU_030807_1_1_1"/>
<dbReference type="InParanoid" id="Q91W39"/>
<dbReference type="OMA" id="PMEEGVR"/>
<dbReference type="OrthoDB" id="10044938at2759"/>
<dbReference type="PhylomeDB" id="Q91W39"/>
<dbReference type="TreeFam" id="TF324704"/>
<dbReference type="BioGRID-ORCS" id="228869">
    <property type="hits" value="4 hits in 78 CRISPR screens"/>
</dbReference>
<dbReference type="ChiTaRS" id="Ncoa5">
    <property type="organism name" value="mouse"/>
</dbReference>
<dbReference type="PRO" id="PR:Q91W39"/>
<dbReference type="Proteomes" id="UP000000589">
    <property type="component" value="Chromosome 2"/>
</dbReference>
<dbReference type="RNAct" id="Q91W39">
    <property type="molecule type" value="protein"/>
</dbReference>
<dbReference type="Bgee" id="ENSMUSG00000039804">
    <property type="expression patterns" value="Expressed in embryonic brain and 232 other cell types or tissues"/>
</dbReference>
<dbReference type="ExpressionAtlas" id="Q91W39">
    <property type="expression patterns" value="baseline and differential"/>
</dbReference>
<dbReference type="GO" id="GO:0015629">
    <property type="term" value="C:actin cytoskeleton"/>
    <property type="evidence" value="ECO:0007669"/>
    <property type="project" value="Ensembl"/>
</dbReference>
<dbReference type="GO" id="GO:0005654">
    <property type="term" value="C:nucleoplasm"/>
    <property type="evidence" value="ECO:0007669"/>
    <property type="project" value="Ensembl"/>
</dbReference>
<dbReference type="GO" id="GO:0003682">
    <property type="term" value="F:chromatin binding"/>
    <property type="evidence" value="ECO:0000314"/>
    <property type="project" value="MGI"/>
</dbReference>
<dbReference type="GO" id="GO:0042593">
    <property type="term" value="P:glucose homeostasis"/>
    <property type="evidence" value="ECO:0000315"/>
    <property type="project" value="MGI"/>
</dbReference>
<dbReference type="GO" id="GO:0008286">
    <property type="term" value="P:insulin receptor signaling pathway"/>
    <property type="evidence" value="ECO:0000315"/>
    <property type="project" value="MGI"/>
</dbReference>
<dbReference type="GO" id="GO:0046627">
    <property type="term" value="P:negative regulation of insulin receptor signaling pathway"/>
    <property type="evidence" value="ECO:0000315"/>
    <property type="project" value="MGI"/>
</dbReference>
<dbReference type="FunFam" id="3.40.50.800:FF:000010">
    <property type="entry name" value="Putative nuclear receptor coactivator 5"/>
    <property type="match status" value="1"/>
</dbReference>
<dbReference type="Gene3D" id="3.40.50.800">
    <property type="entry name" value="Anticodon-binding domain"/>
    <property type="match status" value="1"/>
</dbReference>
<dbReference type="InterPro" id="IPR036621">
    <property type="entry name" value="Anticodon-bd_dom_sf"/>
</dbReference>
<dbReference type="InterPro" id="IPR052600">
    <property type="entry name" value="Nuc_rcpt_coact/corep"/>
</dbReference>
<dbReference type="PANTHER" id="PTHR23295:SF3">
    <property type="entry name" value="NUCLEAR RECEPTOR COACTIVATOR 5"/>
    <property type="match status" value="1"/>
</dbReference>
<dbReference type="PANTHER" id="PTHR23295">
    <property type="entry name" value="NUCLEAR RECEPTOR COACTIVATOR 5-RELATED"/>
    <property type="match status" value="1"/>
</dbReference>
<dbReference type="SUPFAM" id="SSF52954">
    <property type="entry name" value="Class II aaRS ABD-related"/>
    <property type="match status" value="1"/>
</dbReference>
<evidence type="ECO:0000250" key="1"/>
<evidence type="ECO:0000250" key="2">
    <source>
        <dbReference type="UniProtKB" id="Q9HCD5"/>
    </source>
</evidence>
<evidence type="ECO:0000256" key="3">
    <source>
        <dbReference type="SAM" id="MobiDB-lite"/>
    </source>
</evidence>
<evidence type="ECO:0000269" key="4">
    <source>
    </source>
</evidence>
<evidence type="ECO:0000269" key="5">
    <source>
    </source>
</evidence>
<evidence type="ECO:0007744" key="6">
    <source>
    </source>
</evidence>